<dbReference type="EC" id="7.1.1.-" evidence="1"/>
<dbReference type="EMBL" id="CP000437">
    <property type="protein sequence ID" value="ABI83530.1"/>
    <property type="molecule type" value="Genomic_DNA"/>
</dbReference>
<dbReference type="RefSeq" id="WP_003017384.1">
    <property type="nucleotide sequence ID" value="NC_017463.1"/>
</dbReference>
<dbReference type="SMR" id="Q0BK54"/>
<dbReference type="KEGG" id="fth:FTH_1763"/>
<dbReference type="GO" id="GO:0005886">
    <property type="term" value="C:plasma membrane"/>
    <property type="evidence" value="ECO:0007669"/>
    <property type="project" value="UniProtKB-SubCell"/>
</dbReference>
<dbReference type="GO" id="GO:0051287">
    <property type="term" value="F:NAD binding"/>
    <property type="evidence" value="ECO:0007669"/>
    <property type="project" value="InterPro"/>
</dbReference>
<dbReference type="GO" id="GO:0050136">
    <property type="term" value="F:NADH:ubiquinone reductase (non-electrogenic) activity"/>
    <property type="evidence" value="ECO:0007669"/>
    <property type="project" value="UniProtKB-UniRule"/>
</dbReference>
<dbReference type="GO" id="GO:0048038">
    <property type="term" value="F:quinone binding"/>
    <property type="evidence" value="ECO:0007669"/>
    <property type="project" value="UniProtKB-KW"/>
</dbReference>
<dbReference type="FunFam" id="1.10.645.10:FF:000005">
    <property type="entry name" value="NADH-quinone oxidoreductase subunit D"/>
    <property type="match status" value="1"/>
</dbReference>
<dbReference type="Gene3D" id="1.10.645.10">
    <property type="entry name" value="Cytochrome-c3 Hydrogenase, chain B"/>
    <property type="match status" value="1"/>
</dbReference>
<dbReference type="HAMAP" id="MF_01358">
    <property type="entry name" value="NDH1_NuoD"/>
    <property type="match status" value="1"/>
</dbReference>
<dbReference type="InterPro" id="IPR001135">
    <property type="entry name" value="NADH_Q_OxRdtase_suD"/>
</dbReference>
<dbReference type="InterPro" id="IPR014029">
    <property type="entry name" value="NADH_UbQ_OxRdtase_49kDa_CS"/>
</dbReference>
<dbReference type="InterPro" id="IPR022885">
    <property type="entry name" value="NDH1_su_D/H"/>
</dbReference>
<dbReference type="InterPro" id="IPR029014">
    <property type="entry name" value="NiFe-Hase_large"/>
</dbReference>
<dbReference type="NCBIfam" id="TIGR01962">
    <property type="entry name" value="NuoD"/>
    <property type="match status" value="1"/>
</dbReference>
<dbReference type="NCBIfam" id="NF004739">
    <property type="entry name" value="PRK06075.1"/>
    <property type="match status" value="1"/>
</dbReference>
<dbReference type="PANTHER" id="PTHR11993:SF10">
    <property type="entry name" value="NADH DEHYDROGENASE [UBIQUINONE] IRON-SULFUR PROTEIN 2, MITOCHONDRIAL"/>
    <property type="match status" value="1"/>
</dbReference>
<dbReference type="PANTHER" id="PTHR11993">
    <property type="entry name" value="NADH-UBIQUINONE OXIDOREDUCTASE 49 KDA SUBUNIT"/>
    <property type="match status" value="1"/>
</dbReference>
<dbReference type="Pfam" id="PF00346">
    <property type="entry name" value="Complex1_49kDa"/>
    <property type="match status" value="1"/>
</dbReference>
<dbReference type="SUPFAM" id="SSF56762">
    <property type="entry name" value="HydB/Nqo4-like"/>
    <property type="match status" value="1"/>
</dbReference>
<dbReference type="PROSITE" id="PS00535">
    <property type="entry name" value="COMPLEX1_49K"/>
    <property type="match status" value="1"/>
</dbReference>
<organism>
    <name type="scientific">Francisella tularensis subsp. holarctica (strain OSU18)</name>
    <dbReference type="NCBI Taxonomy" id="393011"/>
    <lineage>
        <taxon>Bacteria</taxon>
        <taxon>Pseudomonadati</taxon>
        <taxon>Pseudomonadota</taxon>
        <taxon>Gammaproteobacteria</taxon>
        <taxon>Thiotrichales</taxon>
        <taxon>Francisellaceae</taxon>
        <taxon>Francisella</taxon>
    </lineage>
</organism>
<feature type="chain" id="PRO_0000371867" description="NADH-quinone oxidoreductase subunit D">
    <location>
        <begin position="1"/>
        <end position="417"/>
    </location>
</feature>
<keyword id="KW-0997">Cell inner membrane</keyword>
<keyword id="KW-1003">Cell membrane</keyword>
<keyword id="KW-0472">Membrane</keyword>
<keyword id="KW-0520">NAD</keyword>
<keyword id="KW-0874">Quinone</keyword>
<keyword id="KW-1278">Translocase</keyword>
<keyword id="KW-0813">Transport</keyword>
<keyword id="KW-0830">Ubiquinone</keyword>
<sequence>MAEYKNYTLNFGPVHPAAHGVLRLILELDGENVVRADPHVGLLHRGTEKLAEFKPYNQSIGYMDRLDYVSMMCNEHAYVMAIEKLLQLEVPERAKYIRVMFAEMTRILNHLLWVAACGIDLGAMTVFLYAFRVREDLFDCYEAVSGARMHAAYFRPGGVARDLPTQMPQYQKTRFTSKRKAKKLNEPRQGSMLDFLDHFVVDFEKSLDEIDTLLTDNRLWKQRTVDIGTVTAERAKELGFTGPMLRGSGVAWDLRKTQPYEVYHKLEFDIPIGANGDCYDRYLVRMAEMRESNKLIKQCVDWLRANPGSVLSDNHKVAPPKRNAMKNNMEELIHHFKLFSEGYCTTEGEVYVGTEHPKGEFGVYIKSDGANKPYRLKMRAPGFAHISAMDELLSGHMLADTPAIISTIDVVFGDVDR</sequence>
<name>NUOD_FRATO</name>
<evidence type="ECO:0000255" key="1">
    <source>
        <dbReference type="HAMAP-Rule" id="MF_01358"/>
    </source>
</evidence>
<comment type="function">
    <text evidence="1">NDH-1 shuttles electrons from NADH, via FMN and iron-sulfur (Fe-S) centers, to quinones in the respiratory chain. The immediate electron acceptor for the enzyme in this species is believed to be ubiquinone. Couples the redox reaction to proton translocation (for every two electrons transferred, four hydrogen ions are translocated across the cytoplasmic membrane), and thus conserves the redox energy in a proton gradient.</text>
</comment>
<comment type="catalytic activity">
    <reaction evidence="1">
        <text>a quinone + NADH + 5 H(+)(in) = a quinol + NAD(+) + 4 H(+)(out)</text>
        <dbReference type="Rhea" id="RHEA:57888"/>
        <dbReference type="ChEBI" id="CHEBI:15378"/>
        <dbReference type="ChEBI" id="CHEBI:24646"/>
        <dbReference type="ChEBI" id="CHEBI:57540"/>
        <dbReference type="ChEBI" id="CHEBI:57945"/>
        <dbReference type="ChEBI" id="CHEBI:132124"/>
    </reaction>
</comment>
<comment type="subunit">
    <text evidence="1">NDH-1 is composed of 14 different subunits. Subunits NuoB, C, D, E, F, and G constitute the peripheral sector of the complex.</text>
</comment>
<comment type="subcellular location">
    <subcellularLocation>
        <location evidence="1">Cell inner membrane</location>
        <topology evidence="1">Peripheral membrane protein</topology>
        <orientation evidence="1">Cytoplasmic side</orientation>
    </subcellularLocation>
</comment>
<comment type="similarity">
    <text evidence="1">Belongs to the complex I 49 kDa subunit family.</text>
</comment>
<proteinExistence type="inferred from homology"/>
<gene>
    <name evidence="1" type="primary">nuoD</name>
    <name type="ordered locus">FTH_1763</name>
</gene>
<accession>Q0BK54</accession>
<reference key="1">
    <citation type="journal article" date="2006" name="J. Bacteriol.">
        <title>Chromosome rearrangement and diversification of Francisella tularensis revealed by the type B (OSU18) genome sequence.</title>
        <authorList>
            <person name="Petrosino J.F."/>
            <person name="Xiang Q."/>
            <person name="Karpathy S.E."/>
            <person name="Jiang H."/>
            <person name="Yerrapragada S."/>
            <person name="Liu Y."/>
            <person name="Gioia J."/>
            <person name="Hemphill L."/>
            <person name="Gonzalez A."/>
            <person name="Raghavan T.M."/>
            <person name="Uzman A."/>
            <person name="Fox G.E."/>
            <person name="Highlander S."/>
            <person name="Reichard M."/>
            <person name="Morton R.J."/>
            <person name="Clinkenbeard K.D."/>
            <person name="Weinstock G.M."/>
        </authorList>
    </citation>
    <scope>NUCLEOTIDE SEQUENCE [LARGE SCALE GENOMIC DNA]</scope>
    <source>
        <strain>OSU18</strain>
    </source>
</reference>
<protein>
    <recommendedName>
        <fullName evidence="1">NADH-quinone oxidoreductase subunit D</fullName>
        <ecNumber evidence="1">7.1.1.-</ecNumber>
    </recommendedName>
    <alternativeName>
        <fullName evidence="1">NADH dehydrogenase I subunit D</fullName>
    </alternativeName>
    <alternativeName>
        <fullName evidence="1">NDH-1 subunit D</fullName>
    </alternativeName>
</protein>